<accession>Q6C8U1</accession>
<feature type="chain" id="PRO_0000280583" description="Chitin synthase export chaperone">
    <location>
        <begin position="1"/>
        <end position="335"/>
    </location>
</feature>
<feature type="transmembrane region" description="Helical" evidence="2">
    <location>
        <begin position="55"/>
        <end position="75"/>
    </location>
</feature>
<feature type="transmembrane region" description="Helical" evidence="2">
    <location>
        <begin position="92"/>
        <end position="112"/>
    </location>
</feature>
<feature type="transmembrane region" description="Helical" evidence="2">
    <location>
        <begin position="129"/>
        <end position="149"/>
    </location>
</feature>
<feature type="transmembrane region" description="Helical" evidence="2">
    <location>
        <begin position="164"/>
        <end position="184"/>
    </location>
</feature>
<feature type="transmembrane region" description="Helical" evidence="2">
    <location>
        <begin position="193"/>
        <end position="213"/>
    </location>
</feature>
<feature type="transmembrane region" description="Helical" evidence="2">
    <location>
        <begin position="220"/>
        <end position="240"/>
    </location>
</feature>
<feature type="transmembrane region" description="Helical" evidence="2">
    <location>
        <begin position="259"/>
        <end position="279"/>
    </location>
</feature>
<dbReference type="EMBL" id="CR382130">
    <property type="protein sequence ID" value="CAG81112.1"/>
    <property type="molecule type" value="Genomic_DNA"/>
</dbReference>
<dbReference type="RefSeq" id="XP_502921.1">
    <property type="nucleotide sequence ID" value="XM_502921.1"/>
</dbReference>
<dbReference type="FunCoup" id="Q6C8U1">
    <property type="interactions" value="58"/>
</dbReference>
<dbReference type="STRING" id="284591.Q6C8U1"/>
<dbReference type="EnsemblFungi" id="CAG81112">
    <property type="protein sequence ID" value="CAG81112"/>
    <property type="gene ID" value="YALI0_D17006g"/>
</dbReference>
<dbReference type="KEGG" id="yli:2910219"/>
<dbReference type="VEuPathDB" id="FungiDB:YALI0_D17006g"/>
<dbReference type="HOGENOM" id="CLU_050424_1_1_1"/>
<dbReference type="InParanoid" id="Q6C8U1"/>
<dbReference type="OMA" id="TVWEVKD"/>
<dbReference type="OrthoDB" id="60203at4891"/>
<dbReference type="Proteomes" id="UP000001300">
    <property type="component" value="Chromosome D"/>
</dbReference>
<dbReference type="GO" id="GO:0005789">
    <property type="term" value="C:endoplasmic reticulum membrane"/>
    <property type="evidence" value="ECO:0000318"/>
    <property type="project" value="GO_Central"/>
</dbReference>
<dbReference type="GO" id="GO:0051082">
    <property type="term" value="F:unfolded protein binding"/>
    <property type="evidence" value="ECO:0000318"/>
    <property type="project" value="GO_Central"/>
</dbReference>
<dbReference type="GO" id="GO:0071555">
    <property type="term" value="P:cell wall organization"/>
    <property type="evidence" value="ECO:0007669"/>
    <property type="project" value="UniProtKB-KW"/>
</dbReference>
<dbReference type="GO" id="GO:0006031">
    <property type="term" value="P:chitin biosynthetic process"/>
    <property type="evidence" value="ECO:0000318"/>
    <property type="project" value="GO_Central"/>
</dbReference>
<dbReference type="GO" id="GO:0006457">
    <property type="term" value="P:protein folding"/>
    <property type="evidence" value="ECO:0000318"/>
    <property type="project" value="GO_Central"/>
</dbReference>
<dbReference type="GO" id="GO:0015031">
    <property type="term" value="P:protein transport"/>
    <property type="evidence" value="ECO:0007669"/>
    <property type="project" value="UniProtKB-KW"/>
</dbReference>
<dbReference type="InterPro" id="IPR022057">
    <property type="entry name" value="Chs7"/>
</dbReference>
<dbReference type="PANTHER" id="PTHR35329">
    <property type="entry name" value="CHITIN SYNTHASE EXPORT CHAPERONE"/>
    <property type="match status" value="1"/>
</dbReference>
<dbReference type="PANTHER" id="PTHR35329:SF2">
    <property type="entry name" value="CHITIN SYNTHASE EXPORT CHAPERONE"/>
    <property type="match status" value="1"/>
</dbReference>
<dbReference type="Pfam" id="PF12271">
    <property type="entry name" value="Chs7"/>
    <property type="match status" value="1"/>
</dbReference>
<proteinExistence type="inferred from homology"/>
<gene>
    <name type="primary">CHS7</name>
    <name type="ordered locus">YALI0D17006g</name>
</gene>
<sequence>MGFGDFDFLCNKSPLPLCMLVGPYDKPTTDQTPLLNGIGLMSECYPRSIELANTIIFQVGNTFIHIGALPVILIMMYTVKGKYTAIGRKELFHFLSCFLFLTCMSLVVDAGVAPPGSAAYPYLVAIQNGAISGTMWSLVNFGFLGFQFYEDGTRRAMLFLRGTTLCAFLLTFIISLFTFIPSWGSDAIGPHNTVGLFVVLYLFNLIFVVVYILSQFALAIFILQDIWMIGAVALGTFFFVASQILLYPISSIICKQVKHYIDGTFFATVTNLFAVMMVYKFWDMSTKEDLEFSVGQKDNMWETKELLGEDNGMSRYEVNGSEYAGSTFALNQHQF</sequence>
<name>CHS7_YARLI</name>
<keyword id="KW-0961">Cell wall biogenesis/degradation</keyword>
<keyword id="KW-0256">Endoplasmic reticulum</keyword>
<keyword id="KW-0472">Membrane</keyword>
<keyword id="KW-0653">Protein transport</keyword>
<keyword id="KW-1185">Reference proteome</keyword>
<keyword id="KW-0812">Transmembrane</keyword>
<keyword id="KW-1133">Transmembrane helix</keyword>
<keyword id="KW-0813">Transport</keyword>
<organism>
    <name type="scientific">Yarrowia lipolytica (strain CLIB 122 / E 150)</name>
    <name type="common">Yeast</name>
    <name type="synonym">Candida lipolytica</name>
    <dbReference type="NCBI Taxonomy" id="284591"/>
    <lineage>
        <taxon>Eukaryota</taxon>
        <taxon>Fungi</taxon>
        <taxon>Dikarya</taxon>
        <taxon>Ascomycota</taxon>
        <taxon>Saccharomycotina</taxon>
        <taxon>Dipodascomycetes</taxon>
        <taxon>Dipodascales</taxon>
        <taxon>Dipodascales incertae sedis</taxon>
        <taxon>Yarrowia</taxon>
    </lineage>
</organism>
<evidence type="ECO:0000250" key="1"/>
<evidence type="ECO:0000255" key="2"/>
<evidence type="ECO:0000305" key="3"/>
<protein>
    <recommendedName>
        <fullName>Chitin synthase export chaperone</fullName>
    </recommendedName>
</protein>
<comment type="function">
    <text evidence="1">Chaperone required for the export of the chitin synthase CHS3 from the endoplasmic reticulum.</text>
</comment>
<comment type="subunit">
    <text evidence="1">Interacts with CHS3.</text>
</comment>
<comment type="subcellular location">
    <subcellularLocation>
        <location evidence="1">Endoplasmic reticulum membrane</location>
        <topology evidence="1">Multi-pass membrane protein</topology>
    </subcellularLocation>
</comment>
<comment type="similarity">
    <text evidence="3">Belongs to the CHS7 family.</text>
</comment>
<reference key="1">
    <citation type="journal article" date="2004" name="Nature">
        <title>Genome evolution in yeasts.</title>
        <authorList>
            <person name="Dujon B."/>
            <person name="Sherman D."/>
            <person name="Fischer G."/>
            <person name="Durrens P."/>
            <person name="Casaregola S."/>
            <person name="Lafontaine I."/>
            <person name="de Montigny J."/>
            <person name="Marck C."/>
            <person name="Neuveglise C."/>
            <person name="Talla E."/>
            <person name="Goffard N."/>
            <person name="Frangeul L."/>
            <person name="Aigle M."/>
            <person name="Anthouard V."/>
            <person name="Babour A."/>
            <person name="Barbe V."/>
            <person name="Barnay S."/>
            <person name="Blanchin S."/>
            <person name="Beckerich J.-M."/>
            <person name="Beyne E."/>
            <person name="Bleykasten C."/>
            <person name="Boisrame A."/>
            <person name="Boyer J."/>
            <person name="Cattolico L."/>
            <person name="Confanioleri F."/>
            <person name="de Daruvar A."/>
            <person name="Despons L."/>
            <person name="Fabre E."/>
            <person name="Fairhead C."/>
            <person name="Ferry-Dumazet H."/>
            <person name="Groppi A."/>
            <person name="Hantraye F."/>
            <person name="Hennequin C."/>
            <person name="Jauniaux N."/>
            <person name="Joyet P."/>
            <person name="Kachouri R."/>
            <person name="Kerrest A."/>
            <person name="Koszul R."/>
            <person name="Lemaire M."/>
            <person name="Lesur I."/>
            <person name="Ma L."/>
            <person name="Muller H."/>
            <person name="Nicaud J.-M."/>
            <person name="Nikolski M."/>
            <person name="Oztas S."/>
            <person name="Ozier-Kalogeropoulos O."/>
            <person name="Pellenz S."/>
            <person name="Potier S."/>
            <person name="Richard G.-F."/>
            <person name="Straub M.-L."/>
            <person name="Suleau A."/>
            <person name="Swennen D."/>
            <person name="Tekaia F."/>
            <person name="Wesolowski-Louvel M."/>
            <person name="Westhof E."/>
            <person name="Wirth B."/>
            <person name="Zeniou-Meyer M."/>
            <person name="Zivanovic Y."/>
            <person name="Bolotin-Fukuhara M."/>
            <person name="Thierry A."/>
            <person name="Bouchier C."/>
            <person name="Caudron B."/>
            <person name="Scarpelli C."/>
            <person name="Gaillardin C."/>
            <person name="Weissenbach J."/>
            <person name="Wincker P."/>
            <person name="Souciet J.-L."/>
        </authorList>
    </citation>
    <scope>NUCLEOTIDE SEQUENCE [LARGE SCALE GENOMIC DNA]</scope>
    <source>
        <strain>CLIB 122 / E 150</strain>
    </source>
</reference>